<evidence type="ECO:0000255" key="1">
    <source>
        <dbReference type="HAMAP-Rule" id="MF_01343"/>
    </source>
</evidence>
<evidence type="ECO:0000305" key="2"/>
<organism>
    <name type="scientific">Coxiella burnetii (strain Dugway 5J108-111)</name>
    <dbReference type="NCBI Taxonomy" id="434922"/>
    <lineage>
        <taxon>Bacteria</taxon>
        <taxon>Pseudomonadati</taxon>
        <taxon>Pseudomonadota</taxon>
        <taxon>Gammaproteobacteria</taxon>
        <taxon>Legionellales</taxon>
        <taxon>Coxiellaceae</taxon>
        <taxon>Coxiella</taxon>
    </lineage>
</organism>
<proteinExistence type="inferred from homology"/>
<dbReference type="EMBL" id="CP000733">
    <property type="protein sequence ID" value="ABS77158.1"/>
    <property type="molecule type" value="Genomic_DNA"/>
</dbReference>
<dbReference type="RefSeq" id="WP_005768842.1">
    <property type="nucleotide sequence ID" value="NC_009727.1"/>
</dbReference>
<dbReference type="SMR" id="A9KFK5"/>
<dbReference type="KEGG" id="cbd:CBUD_0916"/>
<dbReference type="HOGENOM" id="CLU_148518_0_0_6"/>
<dbReference type="Proteomes" id="UP000008555">
    <property type="component" value="Chromosome"/>
</dbReference>
<dbReference type="GO" id="GO:0022627">
    <property type="term" value="C:cytosolic small ribosomal subunit"/>
    <property type="evidence" value="ECO:0007669"/>
    <property type="project" value="TreeGrafter"/>
</dbReference>
<dbReference type="GO" id="GO:0019843">
    <property type="term" value="F:rRNA binding"/>
    <property type="evidence" value="ECO:0007669"/>
    <property type="project" value="UniProtKB-UniRule"/>
</dbReference>
<dbReference type="GO" id="GO:0003735">
    <property type="term" value="F:structural constituent of ribosome"/>
    <property type="evidence" value="ECO:0007669"/>
    <property type="project" value="InterPro"/>
</dbReference>
<dbReference type="GO" id="GO:0006412">
    <property type="term" value="P:translation"/>
    <property type="evidence" value="ECO:0007669"/>
    <property type="project" value="UniProtKB-UniRule"/>
</dbReference>
<dbReference type="CDD" id="cd00353">
    <property type="entry name" value="Ribosomal_S15p_S13e"/>
    <property type="match status" value="1"/>
</dbReference>
<dbReference type="FunFam" id="1.10.287.10:FF:000002">
    <property type="entry name" value="30S ribosomal protein S15"/>
    <property type="match status" value="1"/>
</dbReference>
<dbReference type="Gene3D" id="6.10.250.3130">
    <property type="match status" value="1"/>
</dbReference>
<dbReference type="Gene3D" id="1.10.287.10">
    <property type="entry name" value="S15/NS1, RNA-binding"/>
    <property type="match status" value="1"/>
</dbReference>
<dbReference type="HAMAP" id="MF_01343_B">
    <property type="entry name" value="Ribosomal_uS15_B"/>
    <property type="match status" value="1"/>
</dbReference>
<dbReference type="InterPro" id="IPR000589">
    <property type="entry name" value="Ribosomal_uS15"/>
</dbReference>
<dbReference type="InterPro" id="IPR005290">
    <property type="entry name" value="Ribosomal_uS15_bac-type"/>
</dbReference>
<dbReference type="InterPro" id="IPR009068">
    <property type="entry name" value="uS15_NS1_RNA-bd_sf"/>
</dbReference>
<dbReference type="NCBIfam" id="TIGR00952">
    <property type="entry name" value="S15_bact"/>
    <property type="match status" value="1"/>
</dbReference>
<dbReference type="PANTHER" id="PTHR23321">
    <property type="entry name" value="RIBOSOMAL PROTEIN S15, BACTERIAL AND ORGANELLAR"/>
    <property type="match status" value="1"/>
</dbReference>
<dbReference type="PANTHER" id="PTHR23321:SF26">
    <property type="entry name" value="SMALL RIBOSOMAL SUBUNIT PROTEIN US15M"/>
    <property type="match status" value="1"/>
</dbReference>
<dbReference type="Pfam" id="PF00312">
    <property type="entry name" value="Ribosomal_S15"/>
    <property type="match status" value="1"/>
</dbReference>
<dbReference type="SMART" id="SM01387">
    <property type="entry name" value="Ribosomal_S15"/>
    <property type="match status" value="1"/>
</dbReference>
<dbReference type="SUPFAM" id="SSF47060">
    <property type="entry name" value="S15/NS1 RNA-binding domain"/>
    <property type="match status" value="1"/>
</dbReference>
<dbReference type="PROSITE" id="PS00362">
    <property type="entry name" value="RIBOSOMAL_S15"/>
    <property type="match status" value="1"/>
</dbReference>
<feature type="chain" id="PRO_1000086797" description="Small ribosomal subunit protein uS15">
    <location>
        <begin position="1"/>
        <end position="89"/>
    </location>
</feature>
<keyword id="KW-0687">Ribonucleoprotein</keyword>
<keyword id="KW-0689">Ribosomal protein</keyword>
<keyword id="KW-0694">RNA-binding</keyword>
<keyword id="KW-0699">rRNA-binding</keyword>
<accession>A9KFK5</accession>
<reference key="1">
    <citation type="journal article" date="2009" name="Infect. Immun.">
        <title>Comparative genomics reveal extensive transposon-mediated genomic plasticity and diversity among potential effector proteins within the genus Coxiella.</title>
        <authorList>
            <person name="Beare P.A."/>
            <person name="Unsworth N."/>
            <person name="Andoh M."/>
            <person name="Voth D.E."/>
            <person name="Omsland A."/>
            <person name="Gilk S.D."/>
            <person name="Williams K.P."/>
            <person name="Sobral B.W."/>
            <person name="Kupko J.J. III"/>
            <person name="Porcella S.F."/>
            <person name="Samuel J.E."/>
            <person name="Heinzen R.A."/>
        </authorList>
    </citation>
    <scope>NUCLEOTIDE SEQUENCE [LARGE SCALE GENOMIC DNA]</scope>
    <source>
        <strain>Dugway 5J108-111</strain>
    </source>
</reference>
<sequence length="89" mass="10316">MSLASAETAKIVKEYQLGKDDTGSPEVQVAILTAKIIKLTDHMKAHKHDHHSRRGLLRMVSQRRKLLNFLKRNDLQRYLKLIERLGLRS</sequence>
<name>RS15_COXBN</name>
<protein>
    <recommendedName>
        <fullName evidence="1">Small ribosomal subunit protein uS15</fullName>
    </recommendedName>
    <alternativeName>
        <fullName evidence="2">30S ribosomal protein S15</fullName>
    </alternativeName>
</protein>
<gene>
    <name evidence="1" type="primary">rpsO</name>
    <name type="ordered locus">CBUD_0916</name>
</gene>
<comment type="function">
    <text evidence="1">One of the primary rRNA binding proteins, it binds directly to 16S rRNA where it helps nucleate assembly of the platform of the 30S subunit by binding and bridging several RNA helices of the 16S rRNA.</text>
</comment>
<comment type="function">
    <text evidence="1">Forms an intersubunit bridge (bridge B4) with the 23S rRNA of the 50S subunit in the ribosome.</text>
</comment>
<comment type="subunit">
    <text evidence="1">Part of the 30S ribosomal subunit. Forms a bridge to the 50S subunit in the 70S ribosome, contacting the 23S rRNA.</text>
</comment>
<comment type="similarity">
    <text evidence="1">Belongs to the universal ribosomal protein uS15 family.</text>
</comment>